<accession>Q11Y53</accession>
<organism>
    <name type="scientific">Cytophaga hutchinsonii (strain ATCC 33406 / DSM 1761 / CIP 103989 / NBRC 15051 / NCIMB 9469 / D465)</name>
    <dbReference type="NCBI Taxonomy" id="269798"/>
    <lineage>
        <taxon>Bacteria</taxon>
        <taxon>Pseudomonadati</taxon>
        <taxon>Bacteroidota</taxon>
        <taxon>Cytophagia</taxon>
        <taxon>Cytophagales</taxon>
        <taxon>Cytophagaceae</taxon>
        <taxon>Cytophaga</taxon>
    </lineage>
</organism>
<keyword id="KW-0067">ATP-binding</keyword>
<keyword id="KW-0963">Cytoplasm</keyword>
<keyword id="KW-0227">DNA damage</keyword>
<keyword id="KW-0233">DNA recombination</keyword>
<keyword id="KW-0234">DNA repair</keyword>
<keyword id="KW-0238">DNA-binding</keyword>
<keyword id="KW-0378">Hydrolase</keyword>
<keyword id="KW-0547">Nucleotide-binding</keyword>
<keyword id="KW-1185">Reference proteome</keyword>
<sequence>MREDYLKSDDEQFTSGEKEIERALRPLSFDDFAGQDKILENLKIFVGAAKQRGEPLDHVLLHGPPGLGKTTLSNIISNELNSNIKITSGPVLEKPGDLAGLLTNLQTNDVLFIDEIHRLNSVVEEYLYSAMEDYKIDIMLDSGANARSIQIGLNPFTLIGATTRAGLLTSPLRARFGINARLEYYDAKLLTRIVQRSSDLLNTPILETAAFEIARRSRGTPRIANNLLRRTRDFAQIKGDGTITLEIARIALQALNVDHNGLDDMDNRILTTIIDKFKGGPVGLSTIATAVSEEAETIEEVYEPFLIQEGYLKRTSRGREVTPLAYKHLQRTPPAQSGTLFE</sequence>
<dbReference type="EC" id="3.6.4.-" evidence="1"/>
<dbReference type="EMBL" id="CP000383">
    <property type="protein sequence ID" value="ABG57663.1"/>
    <property type="molecule type" value="Genomic_DNA"/>
</dbReference>
<dbReference type="RefSeq" id="WP_011583779.1">
    <property type="nucleotide sequence ID" value="NC_008255.1"/>
</dbReference>
<dbReference type="SMR" id="Q11Y53"/>
<dbReference type="STRING" id="269798.CHU_0373"/>
<dbReference type="KEGG" id="chu:CHU_0373"/>
<dbReference type="eggNOG" id="COG2255">
    <property type="taxonomic scope" value="Bacteria"/>
</dbReference>
<dbReference type="HOGENOM" id="CLU_055599_1_0_10"/>
<dbReference type="OrthoDB" id="9804478at2"/>
<dbReference type="Proteomes" id="UP000001822">
    <property type="component" value="Chromosome"/>
</dbReference>
<dbReference type="GO" id="GO:0005737">
    <property type="term" value="C:cytoplasm"/>
    <property type="evidence" value="ECO:0007669"/>
    <property type="project" value="UniProtKB-SubCell"/>
</dbReference>
<dbReference type="GO" id="GO:0048476">
    <property type="term" value="C:Holliday junction resolvase complex"/>
    <property type="evidence" value="ECO:0007669"/>
    <property type="project" value="UniProtKB-UniRule"/>
</dbReference>
<dbReference type="GO" id="GO:0005524">
    <property type="term" value="F:ATP binding"/>
    <property type="evidence" value="ECO:0007669"/>
    <property type="project" value="UniProtKB-UniRule"/>
</dbReference>
<dbReference type="GO" id="GO:0016887">
    <property type="term" value="F:ATP hydrolysis activity"/>
    <property type="evidence" value="ECO:0007669"/>
    <property type="project" value="InterPro"/>
</dbReference>
<dbReference type="GO" id="GO:0000400">
    <property type="term" value="F:four-way junction DNA binding"/>
    <property type="evidence" value="ECO:0007669"/>
    <property type="project" value="UniProtKB-UniRule"/>
</dbReference>
<dbReference type="GO" id="GO:0009378">
    <property type="term" value="F:four-way junction helicase activity"/>
    <property type="evidence" value="ECO:0007669"/>
    <property type="project" value="InterPro"/>
</dbReference>
<dbReference type="GO" id="GO:0006310">
    <property type="term" value="P:DNA recombination"/>
    <property type="evidence" value="ECO:0007669"/>
    <property type="project" value="UniProtKB-UniRule"/>
</dbReference>
<dbReference type="GO" id="GO:0006281">
    <property type="term" value="P:DNA repair"/>
    <property type="evidence" value="ECO:0007669"/>
    <property type="project" value="UniProtKB-UniRule"/>
</dbReference>
<dbReference type="CDD" id="cd00009">
    <property type="entry name" value="AAA"/>
    <property type="match status" value="1"/>
</dbReference>
<dbReference type="Gene3D" id="1.10.8.60">
    <property type="match status" value="1"/>
</dbReference>
<dbReference type="Gene3D" id="3.40.50.300">
    <property type="entry name" value="P-loop containing nucleotide triphosphate hydrolases"/>
    <property type="match status" value="1"/>
</dbReference>
<dbReference type="Gene3D" id="1.10.10.10">
    <property type="entry name" value="Winged helix-like DNA-binding domain superfamily/Winged helix DNA-binding domain"/>
    <property type="match status" value="1"/>
</dbReference>
<dbReference type="HAMAP" id="MF_00016">
    <property type="entry name" value="DNA_HJ_migration_RuvB"/>
    <property type="match status" value="1"/>
</dbReference>
<dbReference type="InterPro" id="IPR003593">
    <property type="entry name" value="AAA+_ATPase"/>
</dbReference>
<dbReference type="InterPro" id="IPR041445">
    <property type="entry name" value="AAA_lid_4"/>
</dbReference>
<dbReference type="InterPro" id="IPR004605">
    <property type="entry name" value="DNA_helicase_Holl-junc_RuvB"/>
</dbReference>
<dbReference type="InterPro" id="IPR027417">
    <property type="entry name" value="P-loop_NTPase"/>
</dbReference>
<dbReference type="InterPro" id="IPR008824">
    <property type="entry name" value="RuvB-like_N"/>
</dbReference>
<dbReference type="InterPro" id="IPR008823">
    <property type="entry name" value="RuvB_C"/>
</dbReference>
<dbReference type="InterPro" id="IPR036388">
    <property type="entry name" value="WH-like_DNA-bd_sf"/>
</dbReference>
<dbReference type="InterPro" id="IPR036390">
    <property type="entry name" value="WH_DNA-bd_sf"/>
</dbReference>
<dbReference type="NCBIfam" id="NF000868">
    <property type="entry name" value="PRK00080.1"/>
    <property type="match status" value="1"/>
</dbReference>
<dbReference type="NCBIfam" id="TIGR00635">
    <property type="entry name" value="ruvB"/>
    <property type="match status" value="1"/>
</dbReference>
<dbReference type="PANTHER" id="PTHR42848">
    <property type="match status" value="1"/>
</dbReference>
<dbReference type="PANTHER" id="PTHR42848:SF1">
    <property type="entry name" value="HOLLIDAY JUNCTION BRANCH MIGRATION COMPLEX SUBUNIT RUVB"/>
    <property type="match status" value="1"/>
</dbReference>
<dbReference type="Pfam" id="PF17864">
    <property type="entry name" value="AAA_lid_4"/>
    <property type="match status" value="1"/>
</dbReference>
<dbReference type="Pfam" id="PF05491">
    <property type="entry name" value="RuvB_C"/>
    <property type="match status" value="1"/>
</dbReference>
<dbReference type="Pfam" id="PF05496">
    <property type="entry name" value="RuvB_N"/>
    <property type="match status" value="1"/>
</dbReference>
<dbReference type="SMART" id="SM00382">
    <property type="entry name" value="AAA"/>
    <property type="match status" value="1"/>
</dbReference>
<dbReference type="SUPFAM" id="SSF52540">
    <property type="entry name" value="P-loop containing nucleoside triphosphate hydrolases"/>
    <property type="match status" value="1"/>
</dbReference>
<dbReference type="SUPFAM" id="SSF46785">
    <property type="entry name" value="Winged helix' DNA-binding domain"/>
    <property type="match status" value="1"/>
</dbReference>
<name>RUVB_CYTH3</name>
<proteinExistence type="inferred from homology"/>
<evidence type="ECO:0000255" key="1">
    <source>
        <dbReference type="HAMAP-Rule" id="MF_00016"/>
    </source>
</evidence>
<gene>
    <name evidence="1" type="primary">ruvB</name>
    <name type="ordered locus">CHU_0373</name>
</gene>
<comment type="function">
    <text evidence="1">The RuvA-RuvB-RuvC complex processes Holliday junction (HJ) DNA during genetic recombination and DNA repair, while the RuvA-RuvB complex plays an important role in the rescue of blocked DNA replication forks via replication fork reversal (RFR). RuvA specifically binds to HJ cruciform DNA, conferring on it an open structure. The RuvB hexamer acts as an ATP-dependent pump, pulling dsDNA into and through the RuvAB complex. RuvB forms 2 homohexamers on either side of HJ DNA bound by 1 or 2 RuvA tetramers; 4 subunits per hexamer contact DNA at a time. Coordinated motions by a converter formed by DNA-disengaged RuvB subunits stimulates ATP hydrolysis and nucleotide exchange. Immobilization of the converter enables RuvB to convert the ATP-contained energy into a lever motion, pulling 2 nucleotides of DNA out of the RuvA tetramer per ATP hydrolyzed, thus driving DNA branch migration. The RuvB motors rotate together with the DNA substrate, which together with the progressing nucleotide cycle form the mechanistic basis for DNA recombination by continuous HJ branch migration. Branch migration allows RuvC to scan DNA until it finds its consensus sequence, where it cleaves and resolves cruciform DNA.</text>
</comment>
<comment type="catalytic activity">
    <reaction evidence="1">
        <text>ATP + H2O = ADP + phosphate + H(+)</text>
        <dbReference type="Rhea" id="RHEA:13065"/>
        <dbReference type="ChEBI" id="CHEBI:15377"/>
        <dbReference type="ChEBI" id="CHEBI:15378"/>
        <dbReference type="ChEBI" id="CHEBI:30616"/>
        <dbReference type="ChEBI" id="CHEBI:43474"/>
        <dbReference type="ChEBI" id="CHEBI:456216"/>
    </reaction>
</comment>
<comment type="subunit">
    <text evidence="1">Homohexamer. Forms an RuvA(8)-RuvB(12)-Holliday junction (HJ) complex. HJ DNA is sandwiched between 2 RuvA tetramers; dsDNA enters through RuvA and exits via RuvB. An RuvB hexamer assembles on each DNA strand where it exits the tetramer. Each RuvB hexamer is contacted by two RuvA subunits (via domain III) on 2 adjacent RuvB subunits; this complex drives branch migration. In the full resolvosome a probable DNA-RuvA(4)-RuvB(12)-RuvC(2) complex forms which resolves the HJ.</text>
</comment>
<comment type="subcellular location">
    <subcellularLocation>
        <location evidence="1">Cytoplasm</location>
    </subcellularLocation>
</comment>
<comment type="domain">
    <text evidence="1">Has 3 domains, the large (RuvB-L) and small ATPase (RuvB-S) domains and the C-terminal head (RuvB-H) domain. The head domain binds DNA, while the ATPase domains jointly bind ATP, ADP or are empty depending on the state of the subunit in the translocation cycle. During a single DNA translocation step the structure of each domain remains the same, but their relative positions change.</text>
</comment>
<comment type="similarity">
    <text evidence="1">Belongs to the RuvB family.</text>
</comment>
<protein>
    <recommendedName>
        <fullName evidence="1">Holliday junction branch migration complex subunit RuvB</fullName>
        <ecNumber evidence="1">3.6.4.-</ecNumber>
    </recommendedName>
</protein>
<reference key="1">
    <citation type="journal article" date="2007" name="Appl. Environ. Microbiol.">
        <title>Genome sequence of the cellulolytic gliding bacterium Cytophaga hutchinsonii.</title>
        <authorList>
            <person name="Xie G."/>
            <person name="Bruce D.C."/>
            <person name="Challacombe J.F."/>
            <person name="Chertkov O."/>
            <person name="Detter J.C."/>
            <person name="Gilna P."/>
            <person name="Han C.S."/>
            <person name="Lucas S."/>
            <person name="Misra M."/>
            <person name="Myers G.L."/>
            <person name="Richardson P."/>
            <person name="Tapia R."/>
            <person name="Thayer N."/>
            <person name="Thompson L.S."/>
            <person name="Brettin T.S."/>
            <person name="Henrissat B."/>
            <person name="Wilson D.B."/>
            <person name="McBride M.J."/>
        </authorList>
    </citation>
    <scope>NUCLEOTIDE SEQUENCE [LARGE SCALE GENOMIC DNA]</scope>
    <source>
        <strain>ATCC 33406 / DSM 1761 / JCM 20678 / CIP 103989 / IAM 12607 / NBRC 15051 / NCIMB 9469 / D465</strain>
    </source>
</reference>
<feature type="chain" id="PRO_0000322791" description="Holliday junction branch migration complex subunit RuvB">
    <location>
        <begin position="1"/>
        <end position="342"/>
    </location>
</feature>
<feature type="region of interest" description="Large ATPase domain (RuvB-L)" evidence="1">
    <location>
        <begin position="1"/>
        <end position="185"/>
    </location>
</feature>
<feature type="region of interest" description="Small ATPAse domain (RuvB-S)" evidence="1">
    <location>
        <begin position="186"/>
        <end position="256"/>
    </location>
</feature>
<feature type="region of interest" description="Head domain (RuvB-H)" evidence="1">
    <location>
        <begin position="259"/>
        <end position="342"/>
    </location>
</feature>
<feature type="binding site" evidence="1">
    <location>
        <position position="24"/>
    </location>
    <ligand>
        <name>ATP</name>
        <dbReference type="ChEBI" id="CHEBI:30616"/>
    </ligand>
</feature>
<feature type="binding site" evidence="1">
    <location>
        <position position="25"/>
    </location>
    <ligand>
        <name>ATP</name>
        <dbReference type="ChEBI" id="CHEBI:30616"/>
    </ligand>
</feature>
<feature type="binding site" evidence="1">
    <location>
        <position position="66"/>
    </location>
    <ligand>
        <name>ATP</name>
        <dbReference type="ChEBI" id="CHEBI:30616"/>
    </ligand>
</feature>
<feature type="binding site" evidence="1">
    <location>
        <position position="69"/>
    </location>
    <ligand>
        <name>ATP</name>
        <dbReference type="ChEBI" id="CHEBI:30616"/>
    </ligand>
</feature>
<feature type="binding site" evidence="1">
    <location>
        <position position="70"/>
    </location>
    <ligand>
        <name>ATP</name>
        <dbReference type="ChEBI" id="CHEBI:30616"/>
    </ligand>
</feature>
<feature type="binding site" evidence="1">
    <location>
        <position position="70"/>
    </location>
    <ligand>
        <name>Mg(2+)</name>
        <dbReference type="ChEBI" id="CHEBI:18420"/>
    </ligand>
</feature>
<feature type="binding site" evidence="1">
    <location>
        <position position="71"/>
    </location>
    <ligand>
        <name>ATP</name>
        <dbReference type="ChEBI" id="CHEBI:30616"/>
    </ligand>
</feature>
<feature type="binding site" evidence="1">
    <location>
        <begin position="132"/>
        <end position="134"/>
    </location>
    <ligand>
        <name>ATP</name>
        <dbReference type="ChEBI" id="CHEBI:30616"/>
    </ligand>
</feature>
<feature type="binding site" evidence="1">
    <location>
        <position position="175"/>
    </location>
    <ligand>
        <name>ATP</name>
        <dbReference type="ChEBI" id="CHEBI:30616"/>
    </ligand>
</feature>
<feature type="binding site" evidence="1">
    <location>
        <position position="185"/>
    </location>
    <ligand>
        <name>ATP</name>
        <dbReference type="ChEBI" id="CHEBI:30616"/>
    </ligand>
</feature>
<feature type="binding site" evidence="1">
    <location>
        <position position="222"/>
    </location>
    <ligand>
        <name>ATP</name>
        <dbReference type="ChEBI" id="CHEBI:30616"/>
    </ligand>
</feature>
<feature type="binding site" evidence="1">
    <location>
        <position position="314"/>
    </location>
    <ligand>
        <name>DNA</name>
        <dbReference type="ChEBI" id="CHEBI:16991"/>
    </ligand>
</feature>
<feature type="binding site" evidence="1">
    <location>
        <position position="319"/>
    </location>
    <ligand>
        <name>DNA</name>
        <dbReference type="ChEBI" id="CHEBI:16991"/>
    </ligand>
</feature>